<proteinExistence type="evidence at transcript level"/>
<dbReference type="EC" id="3.2.1.18"/>
<dbReference type="EMBL" id="M73976">
    <property type="protein sequence ID" value="AAA16907.1"/>
    <property type="molecule type" value="mRNA"/>
</dbReference>
<dbReference type="CAZy" id="GH34">
    <property type="family name" value="Glycoside Hydrolase Family 34"/>
</dbReference>
<dbReference type="GlyCosmos" id="P26143">
    <property type="glycosylation" value="5 sites, No reported glycans"/>
</dbReference>
<dbReference type="GO" id="GO:0020002">
    <property type="term" value="C:host cell plasma membrane"/>
    <property type="evidence" value="ECO:0007669"/>
    <property type="project" value="UniProtKB-SubCell"/>
</dbReference>
<dbReference type="GO" id="GO:0016020">
    <property type="term" value="C:membrane"/>
    <property type="evidence" value="ECO:0007669"/>
    <property type="project" value="UniProtKB-KW"/>
</dbReference>
<dbReference type="GO" id="GO:0055036">
    <property type="term" value="C:virion membrane"/>
    <property type="evidence" value="ECO:0007669"/>
    <property type="project" value="UniProtKB-SubCell"/>
</dbReference>
<dbReference type="GO" id="GO:0004308">
    <property type="term" value="F:exo-alpha-sialidase activity"/>
    <property type="evidence" value="ECO:0007669"/>
    <property type="project" value="UniProtKB-EC"/>
</dbReference>
<dbReference type="GO" id="GO:0046872">
    <property type="term" value="F:metal ion binding"/>
    <property type="evidence" value="ECO:0007669"/>
    <property type="project" value="UniProtKB-KW"/>
</dbReference>
<dbReference type="Gene3D" id="2.120.10.10">
    <property type="match status" value="1"/>
</dbReference>
<dbReference type="InterPro" id="IPR036278">
    <property type="entry name" value="Sialidase_sf"/>
</dbReference>
<dbReference type="SUPFAM" id="SSF50939">
    <property type="entry name" value="Sialidases"/>
    <property type="match status" value="1"/>
</dbReference>
<gene>
    <name type="primary">NA</name>
</gene>
<sequence>GIISLILQIGNIISIWVSHSIQTGSQNHTGICNQRIITYENSTWVNQTYVNISNTNVVAGKDTTSMTLAGNSSLCPIRGWAIYSKDNSIRIGSKGDVFVIREP</sequence>
<accession>P26143</accession>
<keyword id="KW-0106">Calcium</keyword>
<keyword id="KW-0325">Glycoprotein</keyword>
<keyword id="KW-0326">Glycosidase</keyword>
<keyword id="KW-1032">Host cell membrane</keyword>
<keyword id="KW-1043">Host membrane</keyword>
<keyword id="KW-0378">Hydrolase</keyword>
<keyword id="KW-0472">Membrane</keyword>
<keyword id="KW-0479">Metal-binding</keyword>
<keyword id="KW-0735">Signal-anchor</keyword>
<keyword id="KW-0812">Transmembrane</keyword>
<keyword id="KW-1133">Transmembrane helix</keyword>
<keyword id="KW-0946">Virion</keyword>
<protein>
    <recommendedName>
        <fullName>Neuraminidase</fullName>
        <ecNumber>3.2.1.18</ecNumber>
    </recommendedName>
</protein>
<organism>
    <name type="scientific">Influenza A virus (strain A/Camel/Mongolia/1982 H1N1)</name>
    <dbReference type="NCBI Taxonomy" id="387191"/>
    <lineage>
        <taxon>Viruses</taxon>
        <taxon>Riboviria</taxon>
        <taxon>Orthornavirae</taxon>
        <taxon>Negarnaviricota</taxon>
        <taxon>Polyploviricotina</taxon>
        <taxon>Insthoviricetes</taxon>
        <taxon>Articulavirales</taxon>
        <taxon>Orthomyxoviridae</taxon>
        <taxon>Alphainfluenzavirus</taxon>
        <taxon>Alphainfluenzavirus influenzae</taxon>
        <taxon>Influenza A virus</taxon>
    </lineage>
</organism>
<evidence type="ECO:0000250" key="1"/>
<evidence type="ECO:0000255" key="2"/>
<evidence type="ECO:0000305" key="3"/>
<organismHost>
    <name type="scientific">Aves</name>
    <dbReference type="NCBI Taxonomy" id="8782"/>
</organismHost>
<organismHost>
    <name type="scientific">Homo sapiens</name>
    <name type="common">Human</name>
    <dbReference type="NCBI Taxonomy" id="9606"/>
</organismHost>
<organismHost>
    <name type="scientific">Sus scrofa</name>
    <name type="common">Pig</name>
    <dbReference type="NCBI Taxonomy" id="9823"/>
</organismHost>
<reference key="1">
    <citation type="journal article" date="1993" name="Virology">
        <title>A reassortant H1N1 influenza A virus caused fatal epizootics among camels in Mongolia.</title>
        <authorList>
            <person name="Yamnikova S.S."/>
            <person name="Mandler J."/>
            <person name="Bekh-Ochir Z.H."/>
            <person name="Dachtzeren P."/>
            <person name="Ludwig S."/>
            <person name="Lvov D.K."/>
            <person name="Scholtissek C."/>
        </authorList>
    </citation>
    <scope>NUCLEOTIDE SEQUENCE [MRNA]</scope>
</reference>
<reference key="2">
    <citation type="journal article" date="2004" name="Virus Res.">
        <title>Assembly and budding of influenza virus.</title>
        <authorList>
            <person name="Nayak D.P."/>
            <person name="Hui E.K."/>
            <person name="Barman S."/>
        </authorList>
    </citation>
    <scope>REVIEW</scope>
</reference>
<reference key="3">
    <citation type="journal article" date="2005" name="N. Engl. J. Med.">
        <title>Neuraminidase inhibitors for influenza.</title>
        <authorList>
            <person name="Moscona A."/>
        </authorList>
    </citation>
    <scope>REVIEW</scope>
</reference>
<reference key="4">
    <citation type="journal article" date="2005" name="Biol. Pharm. Bull.">
        <title>Sialobiology of influenza: molecular mechanism of host range variation of influenza viruses.</title>
        <authorList>
            <person name="Suzuki Y."/>
        </authorList>
    </citation>
    <scope>REVIEW</scope>
</reference>
<name>NRAM_I82A2</name>
<feature type="chain" id="PRO_0000078678" description="Neuraminidase">
    <location>
        <begin position="1" status="less than"/>
        <end position="103" status="greater than"/>
    </location>
</feature>
<feature type="transmembrane region" description="Helical; Signal-anchor for type II membrane protein" evidence="2">
    <location>
        <begin position="1" status="less than"/>
        <end position="18"/>
    </location>
</feature>
<feature type="topological domain" description="Virion surface" evidence="2">
    <location>
        <begin position="19"/>
        <end position="103" status="greater than"/>
    </location>
</feature>
<feature type="binding site" evidence="1">
    <location>
        <position position="101"/>
    </location>
    <ligand>
        <name>substrate</name>
    </ligand>
</feature>
<feature type="glycosylation site" description="N-linked (GlcNAc...) asparagine; by host" evidence="2">
    <location>
        <position position="27"/>
    </location>
</feature>
<feature type="glycosylation site" description="N-linked (GlcNAc...) asparagine; by host" evidence="2">
    <location>
        <position position="41"/>
    </location>
</feature>
<feature type="glycosylation site" description="N-linked (GlcNAc...) asparagine; by host" evidence="2">
    <location>
        <position position="46"/>
    </location>
</feature>
<feature type="glycosylation site" description="N-linked (GlcNAc...) asparagine; by host" evidence="2">
    <location>
        <position position="51"/>
    </location>
</feature>
<feature type="glycosylation site" description="N-linked (GlcNAc...) asparagine; by host" evidence="2">
    <location>
        <position position="71"/>
    </location>
</feature>
<feature type="non-terminal residue">
    <location>
        <position position="1"/>
    </location>
</feature>
<feature type="non-terminal residue">
    <location>
        <position position="103"/>
    </location>
</feature>
<comment type="function">
    <text>Catalyzes the removal of terminal sialic acid residues from viral and cellular glycoconjugates. Cleaves off the terminal sialic acids on the glycosylated HA during virus budding to facilitate virus release. Additionally helps virus spread through the circulation by further removing sialic acids from the cell surface. These cleavages prevent self-aggregation and ensure the efficient spread of the progeny virus from cell to cell. Otherwise, infection would be limited to one round of replication. Described as a receptor-destroying enzyme because it cleaves a terminal sialic acid from the cellular receptors. May facilitate viral invasion of the upper airways by cleaving the sialic acid moieties on the mucin of the airway epithelial cells. Likely to plays a role in the budding process through its association with lipid rafts during intracellular transport. May additionally display a raft-association independent effect on budding. Plays a role in the determination of host range restriction on replication and virulence. Sialidase activity in late endosome/lysosome traffic seems to enhance virus replication.</text>
</comment>
<comment type="catalytic activity">
    <reaction>
        <text>Hydrolysis of alpha-(2-&gt;3)-, alpha-(2-&gt;6)-, alpha-(2-&gt;8)- glycosidic linkages of terminal sialic acid residues in oligosaccharides, glycoproteins, glycolipids, colominic acid and synthetic substrates.</text>
        <dbReference type="EC" id="3.2.1.18"/>
    </reaction>
</comment>
<comment type="cofactor">
    <cofactor evidence="1">
        <name>Ca(2+)</name>
        <dbReference type="ChEBI" id="CHEBI:29108"/>
    </cofactor>
    <text evidence="1">Binds 1 Ca(2+) ion per subunit.</text>
</comment>
<comment type="activity regulation">
    <text>Inhibited by the neuraminidase inhibitors zanamivir (Relenza) and oseltamivir (Tamiflu). These drugs interfere with the release of progeny virus from infected cells and are effective against all influenza strains. Resistance to neuraminidase inhibitors is quite rare.</text>
</comment>
<comment type="subunit">
    <text evidence="1">Homotetramer.</text>
</comment>
<comment type="subcellular location">
    <subcellularLocation>
        <location evidence="1">Virion membrane</location>
    </subcellularLocation>
    <subcellularLocation>
        <location evidence="1">Host apical cell membrane</location>
        <topology evidence="1">Single-pass type II membrane protein</topology>
    </subcellularLocation>
    <text evidence="1">Preferentially accumulates at the apical plasma membrane in infected polarized epithelial cells, which is the virus assembly site. Uses lipid rafts for cell surface transport and apical sorting. In the virion, forms a mushroom-shaped spike on the surface of the membrane (By similarity).</text>
</comment>
<comment type="domain">
    <text evidence="1">Intact N-terminus is essential for virion morphogenesis. Possesses two apical sorting signals, one in the ectodomain, which is likely to be a glycan, and the other in the transmembrane domain. The transmembrane domain also plays a role in lipid raft association (By similarity).</text>
</comment>
<comment type="PTM">
    <text evidence="1">N-glycosylated.</text>
</comment>
<comment type="miscellaneous">
    <text>The influenza A genome consist of 8 RNA segments. Genetic variation of hemagglutinin and/or neuraminidase genes results in the emergence of new influenza strains. The mechanism of variation can be the result of point mutations or the result of genetic reassortment between segments of two different strains.</text>
</comment>
<comment type="similarity">
    <text evidence="3">Belongs to the glycosyl hydrolase 34 family.</text>
</comment>